<name>HEM3_YERPE</name>
<evidence type="ECO:0000250" key="1"/>
<evidence type="ECO:0000305" key="2"/>
<proteinExistence type="inferred from homology"/>
<sequence>MLDKIIRIATRQSPLALWQAHYVQHLLQANHPGLQIELVPMVTRGDIILDTPLAKVGGKGLFVKELELALLDGRADIAVHSMKDVPIAFPEGLGLVTICEREDPRDAFVSSHYAHLDDLPAGSVVGTSSLRRQCQLRERRPDLIIRDLRGNVGTRLAKLDNGDYQAIILAVAGLKRLGLENRIRYAMSAEESLPAVGQGAVGIECRLDDDHTRQLLAPLNHRHTELRVCAERAMNIRLEGGCQVPIGSYAELEGDTLWLRALVGAPDGSQMIRGERRGPAAEAEQMGIELADELLSRGAREILAAVYLDNPAR</sequence>
<reference key="1">
    <citation type="journal article" date="2001" name="Nature">
        <title>Genome sequence of Yersinia pestis, the causative agent of plague.</title>
        <authorList>
            <person name="Parkhill J."/>
            <person name="Wren B.W."/>
            <person name="Thomson N.R."/>
            <person name="Titball R.W."/>
            <person name="Holden M.T.G."/>
            <person name="Prentice M.B."/>
            <person name="Sebaihia M."/>
            <person name="James K.D."/>
            <person name="Churcher C.M."/>
            <person name="Mungall K.L."/>
            <person name="Baker S."/>
            <person name="Basham D."/>
            <person name="Bentley S.D."/>
            <person name="Brooks K."/>
            <person name="Cerdeno-Tarraga A.-M."/>
            <person name="Chillingworth T."/>
            <person name="Cronin A."/>
            <person name="Davies R.M."/>
            <person name="Davis P."/>
            <person name="Dougan G."/>
            <person name="Feltwell T."/>
            <person name="Hamlin N."/>
            <person name="Holroyd S."/>
            <person name="Jagels K."/>
            <person name="Karlyshev A.V."/>
            <person name="Leather S."/>
            <person name="Moule S."/>
            <person name="Oyston P.C.F."/>
            <person name="Quail M.A."/>
            <person name="Rutherford K.M."/>
            <person name="Simmonds M."/>
            <person name="Skelton J."/>
            <person name="Stevens K."/>
            <person name="Whitehead S."/>
            <person name="Barrell B.G."/>
        </authorList>
    </citation>
    <scope>NUCLEOTIDE SEQUENCE [LARGE SCALE GENOMIC DNA]</scope>
    <source>
        <strain>CO-92 / Biovar Orientalis</strain>
    </source>
</reference>
<reference key="2">
    <citation type="journal article" date="2002" name="J. Bacteriol.">
        <title>Genome sequence of Yersinia pestis KIM.</title>
        <authorList>
            <person name="Deng W."/>
            <person name="Burland V."/>
            <person name="Plunkett G. III"/>
            <person name="Boutin A."/>
            <person name="Mayhew G.F."/>
            <person name="Liss P."/>
            <person name="Perna N.T."/>
            <person name="Rose D.J."/>
            <person name="Mau B."/>
            <person name="Zhou S."/>
            <person name="Schwartz D.C."/>
            <person name="Fetherston J.D."/>
            <person name="Lindler L.E."/>
            <person name="Brubaker R.R."/>
            <person name="Plano G.V."/>
            <person name="Straley S.C."/>
            <person name="McDonough K.A."/>
            <person name="Nilles M.L."/>
            <person name="Matson J.S."/>
            <person name="Blattner F.R."/>
            <person name="Perry R.D."/>
        </authorList>
    </citation>
    <scope>NUCLEOTIDE SEQUENCE [LARGE SCALE GENOMIC DNA]</scope>
    <source>
        <strain>KIM10+ / Biovar Mediaevalis</strain>
    </source>
</reference>
<reference key="3">
    <citation type="journal article" date="2004" name="DNA Res.">
        <title>Complete genome sequence of Yersinia pestis strain 91001, an isolate avirulent to humans.</title>
        <authorList>
            <person name="Song Y."/>
            <person name="Tong Z."/>
            <person name="Wang J."/>
            <person name="Wang L."/>
            <person name="Guo Z."/>
            <person name="Han Y."/>
            <person name="Zhang J."/>
            <person name="Pei D."/>
            <person name="Zhou D."/>
            <person name="Qin H."/>
            <person name="Pang X."/>
            <person name="Han Y."/>
            <person name="Zhai J."/>
            <person name="Li M."/>
            <person name="Cui B."/>
            <person name="Qi Z."/>
            <person name="Jin L."/>
            <person name="Dai R."/>
            <person name="Chen F."/>
            <person name="Li S."/>
            <person name="Ye C."/>
            <person name="Du Z."/>
            <person name="Lin W."/>
            <person name="Wang J."/>
            <person name="Yu J."/>
            <person name="Yang H."/>
            <person name="Wang J."/>
            <person name="Huang P."/>
            <person name="Yang R."/>
        </authorList>
    </citation>
    <scope>NUCLEOTIDE SEQUENCE [LARGE SCALE GENOMIC DNA]</scope>
    <source>
        <strain>91001 / Biovar Mediaevalis</strain>
    </source>
</reference>
<reference key="4">
    <citation type="journal article" date="1996" name="Biochimie">
        <title>Comparative analysis of the cya locus in enterobacteria and related Gram-negative facultative anaerobes.</title>
        <authorList>
            <person name="Trotot P."/>
            <person name="Sismeiro O."/>
            <person name="Vivares C."/>
            <person name="Glaser P."/>
            <person name="Bresson-Roy A."/>
            <person name="Danchin A."/>
        </authorList>
    </citation>
    <scope>NUCLEOTIDE SEQUENCE [GENOMIC DNA] OF 1-183</scope>
    <source>
        <strain>EV 40</strain>
    </source>
</reference>
<keyword id="KW-0627">Porphyrin biosynthesis</keyword>
<keyword id="KW-1185">Reference proteome</keyword>
<keyword id="KW-0808">Transferase</keyword>
<gene>
    <name type="primary">hemC</name>
    <name type="ordered locus">YPO3849</name>
    <name type="ordered locus">y0381</name>
    <name type="ordered locus">YP_3197</name>
</gene>
<accession>P46355</accession>
<accession>Q0WAG1</accession>
<dbReference type="EC" id="2.5.1.61"/>
<dbReference type="EMBL" id="AL590842">
    <property type="protein sequence ID" value="CAL22436.1"/>
    <property type="molecule type" value="Genomic_DNA"/>
</dbReference>
<dbReference type="EMBL" id="AE009952">
    <property type="protein sequence ID" value="AAM83970.1"/>
    <property type="status" value="ALT_INIT"/>
    <property type="molecule type" value="Genomic_DNA"/>
</dbReference>
<dbReference type="EMBL" id="AE017042">
    <property type="protein sequence ID" value="AAS63365.1"/>
    <property type="status" value="ALT_INIT"/>
    <property type="molecule type" value="Genomic_DNA"/>
</dbReference>
<dbReference type="EMBL" id="U22968">
    <property type="protein sequence ID" value="AAC44323.1"/>
    <property type="molecule type" value="Genomic_DNA"/>
</dbReference>
<dbReference type="PIR" id="AI0468">
    <property type="entry name" value="AI0468"/>
</dbReference>
<dbReference type="RefSeq" id="WP_002211465.1">
    <property type="nucleotide sequence ID" value="NZ_WUCM01000033.1"/>
</dbReference>
<dbReference type="RefSeq" id="YP_002348727.1">
    <property type="nucleotide sequence ID" value="NC_003143.1"/>
</dbReference>
<dbReference type="SMR" id="P46355"/>
<dbReference type="IntAct" id="P46355">
    <property type="interactions" value="1"/>
</dbReference>
<dbReference type="STRING" id="214092.YPO3849"/>
<dbReference type="PaxDb" id="214092-YPO3849"/>
<dbReference type="EnsemblBacteria" id="AAS63365">
    <property type="protein sequence ID" value="AAS63365"/>
    <property type="gene ID" value="YP_3197"/>
</dbReference>
<dbReference type="GeneID" id="57974860"/>
<dbReference type="KEGG" id="ype:YPO3849"/>
<dbReference type="KEGG" id="ypk:y0381"/>
<dbReference type="KEGG" id="ypm:YP_3197"/>
<dbReference type="PATRIC" id="fig|214092.21.peg.4375"/>
<dbReference type="eggNOG" id="COG0181">
    <property type="taxonomic scope" value="Bacteria"/>
</dbReference>
<dbReference type="HOGENOM" id="CLU_019704_0_2_6"/>
<dbReference type="OMA" id="LWQANHI"/>
<dbReference type="OrthoDB" id="9810298at2"/>
<dbReference type="UniPathway" id="UPA00251">
    <property type="reaction ID" value="UER00319"/>
</dbReference>
<dbReference type="Proteomes" id="UP000000815">
    <property type="component" value="Chromosome"/>
</dbReference>
<dbReference type="Proteomes" id="UP000001019">
    <property type="component" value="Chromosome"/>
</dbReference>
<dbReference type="Proteomes" id="UP000002490">
    <property type="component" value="Chromosome"/>
</dbReference>
<dbReference type="GO" id="GO:0005737">
    <property type="term" value="C:cytoplasm"/>
    <property type="evidence" value="ECO:0000318"/>
    <property type="project" value="GO_Central"/>
</dbReference>
<dbReference type="GO" id="GO:0004418">
    <property type="term" value="F:hydroxymethylbilane synthase activity"/>
    <property type="evidence" value="ECO:0000318"/>
    <property type="project" value="GO_Central"/>
</dbReference>
<dbReference type="GO" id="GO:0006783">
    <property type="term" value="P:heme biosynthetic process"/>
    <property type="evidence" value="ECO:0000318"/>
    <property type="project" value="GO_Central"/>
</dbReference>
<dbReference type="GO" id="GO:0006782">
    <property type="term" value="P:protoporphyrinogen IX biosynthetic process"/>
    <property type="evidence" value="ECO:0007669"/>
    <property type="project" value="UniProtKB-UniRule"/>
</dbReference>
<dbReference type="CDD" id="cd13646">
    <property type="entry name" value="PBP2_EcHMBS_like"/>
    <property type="match status" value="1"/>
</dbReference>
<dbReference type="FunFam" id="3.30.160.40:FF:000002">
    <property type="entry name" value="Porphobilinogen deaminase"/>
    <property type="match status" value="1"/>
</dbReference>
<dbReference type="FunFam" id="3.40.190.10:FF:000004">
    <property type="entry name" value="Porphobilinogen deaminase"/>
    <property type="match status" value="1"/>
</dbReference>
<dbReference type="FunFam" id="3.40.190.10:FF:000005">
    <property type="entry name" value="Porphobilinogen deaminase"/>
    <property type="match status" value="1"/>
</dbReference>
<dbReference type="Gene3D" id="3.40.190.10">
    <property type="entry name" value="Periplasmic binding protein-like II"/>
    <property type="match status" value="2"/>
</dbReference>
<dbReference type="Gene3D" id="3.30.160.40">
    <property type="entry name" value="Porphobilinogen deaminase, C-terminal domain"/>
    <property type="match status" value="1"/>
</dbReference>
<dbReference type="HAMAP" id="MF_00260">
    <property type="entry name" value="Porphobil_deam"/>
    <property type="match status" value="1"/>
</dbReference>
<dbReference type="InterPro" id="IPR000860">
    <property type="entry name" value="HemC"/>
</dbReference>
<dbReference type="InterPro" id="IPR022419">
    <property type="entry name" value="Porphobilin_deaminase_cofac_BS"/>
</dbReference>
<dbReference type="InterPro" id="IPR022417">
    <property type="entry name" value="Porphobilin_deaminase_N"/>
</dbReference>
<dbReference type="InterPro" id="IPR022418">
    <property type="entry name" value="Porphobilinogen_deaminase_C"/>
</dbReference>
<dbReference type="InterPro" id="IPR036803">
    <property type="entry name" value="Porphobilinogen_deaminase_C_sf"/>
</dbReference>
<dbReference type="NCBIfam" id="TIGR00212">
    <property type="entry name" value="hemC"/>
    <property type="match status" value="1"/>
</dbReference>
<dbReference type="PANTHER" id="PTHR11557">
    <property type="entry name" value="PORPHOBILINOGEN DEAMINASE"/>
    <property type="match status" value="1"/>
</dbReference>
<dbReference type="PANTHER" id="PTHR11557:SF0">
    <property type="entry name" value="PORPHOBILINOGEN DEAMINASE"/>
    <property type="match status" value="1"/>
</dbReference>
<dbReference type="Pfam" id="PF01379">
    <property type="entry name" value="Porphobil_deam"/>
    <property type="match status" value="1"/>
</dbReference>
<dbReference type="Pfam" id="PF03900">
    <property type="entry name" value="Porphobil_deamC"/>
    <property type="match status" value="1"/>
</dbReference>
<dbReference type="PIRSF" id="PIRSF001438">
    <property type="entry name" value="4pyrrol_synth_OHMeBilane_synth"/>
    <property type="match status" value="1"/>
</dbReference>
<dbReference type="PRINTS" id="PR00151">
    <property type="entry name" value="PORPHBDMNASE"/>
</dbReference>
<dbReference type="SUPFAM" id="SSF53850">
    <property type="entry name" value="Periplasmic binding protein-like II"/>
    <property type="match status" value="1"/>
</dbReference>
<dbReference type="SUPFAM" id="SSF54782">
    <property type="entry name" value="Porphobilinogen deaminase (hydroxymethylbilane synthase), C-terminal domain"/>
    <property type="match status" value="1"/>
</dbReference>
<dbReference type="PROSITE" id="PS00533">
    <property type="entry name" value="PORPHOBILINOGEN_DEAM"/>
    <property type="match status" value="1"/>
</dbReference>
<feature type="chain" id="PRO_0000143015" description="Porphobilinogen deaminase">
    <location>
        <begin position="1"/>
        <end position="313"/>
    </location>
</feature>
<feature type="modified residue" description="S-(dipyrrolylmethanemethyl)cysteine" evidence="1">
    <location>
        <position position="242"/>
    </location>
</feature>
<feature type="sequence conflict" description="In Ref. 4." evidence="2" ref="4">
    <original>ENRI</original>
    <variation>GKPN</variation>
    <location>
        <begin position="180"/>
        <end position="183"/>
    </location>
</feature>
<comment type="function">
    <text evidence="1">Tetrapolymerization of the monopyrrole PBG into the hydroxymethylbilane pre-uroporphyrinogen in several discrete steps.</text>
</comment>
<comment type="catalytic activity">
    <reaction>
        <text>4 porphobilinogen + H2O = hydroxymethylbilane + 4 NH4(+)</text>
        <dbReference type="Rhea" id="RHEA:13185"/>
        <dbReference type="ChEBI" id="CHEBI:15377"/>
        <dbReference type="ChEBI" id="CHEBI:28938"/>
        <dbReference type="ChEBI" id="CHEBI:57845"/>
        <dbReference type="ChEBI" id="CHEBI:58126"/>
        <dbReference type="EC" id="2.5.1.61"/>
    </reaction>
</comment>
<comment type="cofactor">
    <cofactor>
        <name>dipyrromethane</name>
        <dbReference type="ChEBI" id="CHEBI:60342"/>
    </cofactor>
    <text>Binds 1 dipyrromethane group covalently.</text>
</comment>
<comment type="pathway">
    <text>Porphyrin-containing compound metabolism; protoporphyrin-IX biosynthesis; coproporphyrinogen-III from 5-aminolevulinate: step 2/4.</text>
</comment>
<comment type="subunit">
    <text>Monomer.</text>
</comment>
<comment type="miscellaneous">
    <text evidence="1">The porphobilinogen subunits are added to the dipyrromethane group.</text>
</comment>
<comment type="similarity">
    <text evidence="2">Belongs to the HMBS family.</text>
</comment>
<comment type="sequence caution" evidence="2">
    <conflict type="erroneous initiation">
        <sequence resource="EMBL-CDS" id="AAM83970"/>
    </conflict>
</comment>
<comment type="sequence caution" evidence="2">
    <conflict type="erroneous initiation">
        <sequence resource="EMBL-CDS" id="AAS63365"/>
    </conflict>
</comment>
<organism>
    <name type="scientific">Yersinia pestis</name>
    <dbReference type="NCBI Taxonomy" id="632"/>
    <lineage>
        <taxon>Bacteria</taxon>
        <taxon>Pseudomonadati</taxon>
        <taxon>Pseudomonadota</taxon>
        <taxon>Gammaproteobacteria</taxon>
        <taxon>Enterobacterales</taxon>
        <taxon>Yersiniaceae</taxon>
        <taxon>Yersinia</taxon>
    </lineage>
</organism>
<protein>
    <recommendedName>
        <fullName>Porphobilinogen deaminase</fullName>
        <shortName>PBG</shortName>
        <ecNumber>2.5.1.61</ecNumber>
    </recommendedName>
    <alternativeName>
        <fullName>Hydroxymethylbilane synthase</fullName>
        <shortName>HMBS</shortName>
    </alternativeName>
    <alternativeName>
        <fullName>Pre-uroporphyrinogen synthase</fullName>
    </alternativeName>
</protein>